<evidence type="ECO:0000255" key="1">
    <source>
        <dbReference type="HAMAP-Rule" id="MF_00534"/>
    </source>
</evidence>
<dbReference type="EC" id="6.1.1.22" evidence="1"/>
<dbReference type="EMBL" id="AP006878">
    <property type="protein sequence ID" value="BAD84948.1"/>
    <property type="molecule type" value="Genomic_DNA"/>
</dbReference>
<dbReference type="RefSeq" id="WP_011249710.1">
    <property type="nucleotide sequence ID" value="NC_006624.1"/>
</dbReference>
<dbReference type="SMR" id="Q5JHC1"/>
<dbReference type="STRING" id="69014.TK0759"/>
<dbReference type="EnsemblBacteria" id="BAD84948">
    <property type="protein sequence ID" value="BAD84948"/>
    <property type="gene ID" value="TK0759"/>
</dbReference>
<dbReference type="GeneID" id="78447273"/>
<dbReference type="KEGG" id="tko:TK0759"/>
<dbReference type="PATRIC" id="fig|69014.16.peg.739"/>
<dbReference type="eggNOG" id="arCOG00407">
    <property type="taxonomic scope" value="Archaea"/>
</dbReference>
<dbReference type="HOGENOM" id="CLU_004553_2_0_2"/>
<dbReference type="InParanoid" id="Q5JHC1"/>
<dbReference type="OrthoDB" id="5908at2157"/>
<dbReference type="PhylomeDB" id="Q5JHC1"/>
<dbReference type="Proteomes" id="UP000000536">
    <property type="component" value="Chromosome"/>
</dbReference>
<dbReference type="GO" id="GO:0005737">
    <property type="term" value="C:cytoplasm"/>
    <property type="evidence" value="ECO:0007669"/>
    <property type="project" value="UniProtKB-SubCell"/>
</dbReference>
<dbReference type="GO" id="GO:0004816">
    <property type="term" value="F:asparagine-tRNA ligase activity"/>
    <property type="evidence" value="ECO:0000318"/>
    <property type="project" value="GO_Central"/>
</dbReference>
<dbReference type="GO" id="GO:0005524">
    <property type="term" value="F:ATP binding"/>
    <property type="evidence" value="ECO:0007669"/>
    <property type="project" value="UniProtKB-UniRule"/>
</dbReference>
<dbReference type="GO" id="GO:0003676">
    <property type="term" value="F:nucleic acid binding"/>
    <property type="evidence" value="ECO:0007669"/>
    <property type="project" value="InterPro"/>
</dbReference>
<dbReference type="GO" id="GO:0006421">
    <property type="term" value="P:asparaginyl-tRNA aminoacylation"/>
    <property type="evidence" value="ECO:0000318"/>
    <property type="project" value="GO_Central"/>
</dbReference>
<dbReference type="CDD" id="cd00776">
    <property type="entry name" value="AsxRS_core"/>
    <property type="match status" value="1"/>
</dbReference>
<dbReference type="CDD" id="cd04319">
    <property type="entry name" value="PhAsnRS_like_N"/>
    <property type="match status" value="1"/>
</dbReference>
<dbReference type="Gene3D" id="3.30.930.10">
    <property type="entry name" value="Bira Bifunctional Protein, Domain 2"/>
    <property type="match status" value="1"/>
</dbReference>
<dbReference type="Gene3D" id="2.40.50.140">
    <property type="entry name" value="Nucleic acid-binding proteins"/>
    <property type="match status" value="1"/>
</dbReference>
<dbReference type="HAMAP" id="MF_00534">
    <property type="entry name" value="Asn_tRNA_synth"/>
    <property type="match status" value="1"/>
</dbReference>
<dbReference type="InterPro" id="IPR004364">
    <property type="entry name" value="Aa-tRNA-synt_II"/>
</dbReference>
<dbReference type="InterPro" id="IPR006195">
    <property type="entry name" value="aa-tRNA-synth_II"/>
</dbReference>
<dbReference type="InterPro" id="IPR045864">
    <property type="entry name" value="aa-tRNA-synth_II/BPL/LPL"/>
</dbReference>
<dbReference type="InterPro" id="IPR004522">
    <property type="entry name" value="Asn-tRNA-ligase"/>
</dbReference>
<dbReference type="InterPro" id="IPR002312">
    <property type="entry name" value="Asp/Asn-tRNA-synth_IIb"/>
</dbReference>
<dbReference type="InterPro" id="IPR012340">
    <property type="entry name" value="NA-bd_OB-fold"/>
</dbReference>
<dbReference type="InterPro" id="IPR004365">
    <property type="entry name" value="NA-bd_OB_tRNA"/>
</dbReference>
<dbReference type="NCBIfam" id="TIGR00457">
    <property type="entry name" value="asnS"/>
    <property type="match status" value="1"/>
</dbReference>
<dbReference type="NCBIfam" id="NF003037">
    <property type="entry name" value="PRK03932.1"/>
    <property type="match status" value="1"/>
</dbReference>
<dbReference type="NCBIfam" id="NF003483">
    <property type="entry name" value="PRK05159.1"/>
    <property type="match status" value="1"/>
</dbReference>
<dbReference type="PANTHER" id="PTHR22594:SF34">
    <property type="entry name" value="ASPARAGINE--TRNA LIGASE, MITOCHONDRIAL-RELATED"/>
    <property type="match status" value="1"/>
</dbReference>
<dbReference type="PANTHER" id="PTHR22594">
    <property type="entry name" value="ASPARTYL/LYSYL-TRNA SYNTHETASE"/>
    <property type="match status" value="1"/>
</dbReference>
<dbReference type="Pfam" id="PF00152">
    <property type="entry name" value="tRNA-synt_2"/>
    <property type="match status" value="1"/>
</dbReference>
<dbReference type="Pfam" id="PF01336">
    <property type="entry name" value="tRNA_anti-codon"/>
    <property type="match status" value="1"/>
</dbReference>
<dbReference type="PRINTS" id="PR01042">
    <property type="entry name" value="TRNASYNTHASP"/>
</dbReference>
<dbReference type="SUPFAM" id="SSF55681">
    <property type="entry name" value="Class II aaRS and biotin synthetases"/>
    <property type="match status" value="1"/>
</dbReference>
<dbReference type="SUPFAM" id="SSF50249">
    <property type="entry name" value="Nucleic acid-binding proteins"/>
    <property type="match status" value="1"/>
</dbReference>
<dbReference type="PROSITE" id="PS50862">
    <property type="entry name" value="AA_TRNA_LIGASE_II"/>
    <property type="match status" value="1"/>
</dbReference>
<reference key="1">
    <citation type="journal article" date="2005" name="Genome Res.">
        <title>Complete genome sequence of the hyperthermophilic archaeon Thermococcus kodakaraensis KOD1 and comparison with Pyrococcus genomes.</title>
        <authorList>
            <person name="Fukui T."/>
            <person name="Atomi H."/>
            <person name="Kanai T."/>
            <person name="Matsumi R."/>
            <person name="Fujiwara S."/>
            <person name="Imanaka T."/>
        </authorList>
    </citation>
    <scope>NUCLEOTIDE SEQUENCE [LARGE SCALE GENOMIC DNA]</scope>
    <source>
        <strain>ATCC BAA-918 / JCM 12380 / KOD1</strain>
    </source>
</reference>
<proteinExistence type="inferred from homology"/>
<accession>Q5JHC1</accession>
<feature type="chain" id="PRO_0000176488" description="Asparagine--tRNA ligase">
    <location>
        <begin position="1"/>
        <end position="431"/>
    </location>
</feature>
<keyword id="KW-0030">Aminoacyl-tRNA synthetase</keyword>
<keyword id="KW-0067">ATP-binding</keyword>
<keyword id="KW-0963">Cytoplasm</keyword>
<keyword id="KW-0436">Ligase</keyword>
<keyword id="KW-0547">Nucleotide-binding</keyword>
<keyword id="KW-0648">Protein biosynthesis</keyword>
<keyword id="KW-1185">Reference proteome</keyword>
<organism>
    <name type="scientific">Thermococcus kodakarensis (strain ATCC BAA-918 / JCM 12380 / KOD1)</name>
    <name type="common">Pyrococcus kodakaraensis (strain KOD1)</name>
    <dbReference type="NCBI Taxonomy" id="69014"/>
    <lineage>
        <taxon>Archaea</taxon>
        <taxon>Methanobacteriati</taxon>
        <taxon>Methanobacteriota</taxon>
        <taxon>Thermococci</taxon>
        <taxon>Thermococcales</taxon>
        <taxon>Thermococcaceae</taxon>
        <taxon>Thermococcus</taxon>
    </lineage>
</organism>
<gene>
    <name evidence="1" type="primary">asnS</name>
    <name type="ordered locus">TK0759</name>
</gene>
<name>SYN_THEKO</name>
<protein>
    <recommendedName>
        <fullName evidence="1">Asparagine--tRNA ligase</fullName>
        <ecNumber evidence="1">6.1.1.22</ecNumber>
    </recommendedName>
    <alternativeName>
        <fullName evidence="1">Asparaginyl-tRNA synthetase</fullName>
        <shortName evidence="1">AsnRS</shortName>
    </alternativeName>
</protein>
<comment type="catalytic activity">
    <reaction evidence="1">
        <text>tRNA(Asn) + L-asparagine + ATP = L-asparaginyl-tRNA(Asn) + AMP + diphosphate + H(+)</text>
        <dbReference type="Rhea" id="RHEA:11180"/>
        <dbReference type="Rhea" id="RHEA-COMP:9659"/>
        <dbReference type="Rhea" id="RHEA-COMP:9674"/>
        <dbReference type="ChEBI" id="CHEBI:15378"/>
        <dbReference type="ChEBI" id="CHEBI:30616"/>
        <dbReference type="ChEBI" id="CHEBI:33019"/>
        <dbReference type="ChEBI" id="CHEBI:58048"/>
        <dbReference type="ChEBI" id="CHEBI:78442"/>
        <dbReference type="ChEBI" id="CHEBI:78515"/>
        <dbReference type="ChEBI" id="CHEBI:456215"/>
        <dbReference type="EC" id="6.1.1.22"/>
    </reaction>
</comment>
<comment type="subcellular location">
    <subcellularLocation>
        <location>Cytoplasm</location>
    </subcellularLocation>
</comment>
<comment type="similarity">
    <text evidence="1">Belongs to the class-II aminoacyl-tRNA synthetase family.</text>
</comment>
<sequence>MIDKVYCADVTPEMEGKKVKLAGWVYRKREVGKKVFIVLRDSSGIVQVVFSKDLNEEAYREAKKVGIESSVIIEGTVKADPRAPTGAEVQGEKLQIIQNVDFFPITKDASDEFLLDVRHLHLRSPKVAAIMKVKGTLMQAAREWLLQDGWYEVFPPILVTGAVEGGATLFKLKYFDRYAYLSQSAQLYLEAAIFGLEKVWSLTPSFRAEKSRTRRHLTEFWHLELEAAWMDLWDIMKVEEELVSYMVQRTLELRKKEIELYRKDDIKTLKNAVPPFPRISYDEAIDILQSKGVNIEWGEDMGADEERVLTEEFESPFFVYGYPKHIKAFYMKEDPEDPRKVLAADMLAPEGYGEIIGGSQREDDYDKLVQRILEEGMKPEDYEWYLDLRKYGSVPHSGFGLGLERLVAWVLKLDHVRWATLFPRTPSRLYP</sequence>